<organism>
    <name type="scientific">Invertebrate iridescent virus 6</name>
    <name type="common">IIV-6</name>
    <name type="synonym">Chilo iridescent virus</name>
    <dbReference type="NCBI Taxonomy" id="176652"/>
    <lineage>
        <taxon>Viruses</taxon>
        <taxon>Varidnaviria</taxon>
        <taxon>Bamfordvirae</taxon>
        <taxon>Nucleocytoviricota</taxon>
        <taxon>Megaviricetes</taxon>
        <taxon>Pimascovirales</taxon>
        <taxon>Iridoviridae</taxon>
        <taxon>Betairidovirinae</taxon>
        <taxon>Iridovirus</taxon>
    </lineage>
</organism>
<proteinExistence type="predicted"/>
<sequence>MNQLNQFILIFLLLIVILFIFFLIPKKEPEIKTFAYEVPIRYSNPRSLYSLPKWKTFYGRNWL</sequence>
<organismHost>
    <name type="scientific">Acheta domesticus</name>
    <name type="common">House cricket</name>
    <dbReference type="NCBI Taxonomy" id="6997"/>
</organismHost>
<organismHost>
    <name type="scientific">Chilo suppressalis</name>
    <name type="common">Asiatic rice borer moth</name>
    <dbReference type="NCBI Taxonomy" id="168631"/>
</organismHost>
<organismHost>
    <name type="scientific">Gryllus bimaculatus</name>
    <name type="common">Two-spotted cricket</name>
    <dbReference type="NCBI Taxonomy" id="6999"/>
</organismHost>
<organismHost>
    <name type="scientific">Gryllus campestris</name>
    <dbReference type="NCBI Taxonomy" id="58607"/>
</organismHost>
<organismHost>
    <name type="scientific">Spodoptera frugiperda</name>
    <name type="common">Fall armyworm</name>
    <dbReference type="NCBI Taxonomy" id="7108"/>
</organismHost>
<keyword id="KW-0472">Membrane</keyword>
<keyword id="KW-1185">Reference proteome</keyword>
<keyword id="KW-0812">Transmembrane</keyword>
<keyword id="KW-1133">Transmembrane helix</keyword>
<accession>Q91FU5</accession>
<gene>
    <name type="ORF">IIV6-227L</name>
</gene>
<feature type="chain" id="PRO_0000378033" description="Uncharacterized protein 227L">
    <location>
        <begin position="1"/>
        <end position="63"/>
    </location>
</feature>
<feature type="transmembrane region" description="Helical" evidence="1">
    <location>
        <begin position="4"/>
        <end position="24"/>
    </location>
</feature>
<protein>
    <recommendedName>
        <fullName>Uncharacterized protein 227L</fullName>
    </recommendedName>
</protein>
<name>227L_IIV6</name>
<comment type="subcellular location">
    <subcellularLocation>
        <location evidence="2">Membrane</location>
        <topology evidence="2">Single-pass membrane protein</topology>
    </subcellularLocation>
</comment>
<dbReference type="EMBL" id="AF303741">
    <property type="protein sequence ID" value="AAK82088.1"/>
    <property type="molecule type" value="Genomic_DNA"/>
</dbReference>
<dbReference type="RefSeq" id="NP_149690.1">
    <property type="nucleotide sequence ID" value="NC_003038.1"/>
</dbReference>
<dbReference type="SMR" id="Q91FU5"/>
<dbReference type="KEGG" id="vg:1733277"/>
<dbReference type="Proteomes" id="UP000001359">
    <property type="component" value="Genome"/>
</dbReference>
<dbReference type="GO" id="GO:0016020">
    <property type="term" value="C:membrane"/>
    <property type="evidence" value="ECO:0007669"/>
    <property type="project" value="UniProtKB-SubCell"/>
</dbReference>
<reference key="1">
    <citation type="journal article" date="2001" name="Virology">
        <title>Analysis of the first complete DNA sequence of an invertebrate iridovirus: coding strategy of the genome of Chilo iridescent virus.</title>
        <authorList>
            <person name="Jakob N.J."/>
            <person name="Mueller K."/>
            <person name="Bahr U."/>
            <person name="Darai G."/>
        </authorList>
    </citation>
    <scope>NUCLEOTIDE SEQUENCE [LARGE SCALE GENOMIC DNA]</scope>
</reference>
<reference key="2">
    <citation type="journal article" date="2007" name="Virol. J.">
        <title>Comparative genomic analysis of the family Iridoviridae: re-annotating and defining the core set of iridovirus genes.</title>
        <authorList>
            <person name="Eaton H.E."/>
            <person name="Metcalf J."/>
            <person name="Penny E."/>
            <person name="Tcherepanov V."/>
            <person name="Upton C."/>
            <person name="Brunetti C.R."/>
        </authorList>
    </citation>
    <scope>GENOME REANNOTATION</scope>
</reference>
<evidence type="ECO:0000255" key="1"/>
<evidence type="ECO:0000305" key="2"/>